<protein>
    <recommendedName>
        <fullName evidence="1">Glutamyl-tRNA(Gln) amidotransferase subunit B, mitochondrial</fullName>
        <shortName evidence="1">Glu-AdT subunit B</shortName>
        <ecNumber evidence="1">6.3.5.-</ecNumber>
    </recommendedName>
</protein>
<proteinExistence type="inferred from homology"/>
<reference key="1">
    <citation type="journal article" date="2012" name="MBio">
        <title>Comparative genome analysis of Trichophyton rubrum and related dermatophytes reveals candidate genes involved in infection.</title>
        <authorList>
            <person name="Martinez D.A."/>
            <person name="Oliver B.G."/>
            <person name="Graeser Y."/>
            <person name="Goldberg J.M."/>
            <person name="Li W."/>
            <person name="Martinez-Rossi N.M."/>
            <person name="Monod M."/>
            <person name="Shelest E."/>
            <person name="Barton R.C."/>
            <person name="Birch E."/>
            <person name="Brakhage A.A."/>
            <person name="Chen Z."/>
            <person name="Gurr S.J."/>
            <person name="Heiman D."/>
            <person name="Heitman J."/>
            <person name="Kosti I."/>
            <person name="Rossi A."/>
            <person name="Saif S."/>
            <person name="Samalova M."/>
            <person name="Saunders C.W."/>
            <person name="Shea T."/>
            <person name="Summerbell R.C."/>
            <person name="Xu J."/>
            <person name="Young S."/>
            <person name="Zeng Q."/>
            <person name="Birren B.W."/>
            <person name="Cuomo C.A."/>
            <person name="White T.C."/>
        </authorList>
    </citation>
    <scope>NUCLEOTIDE SEQUENCE [LARGE SCALE GENOMIC DNA]</scope>
    <source>
        <strain>ATCC MYA-4605 / CBS 113480</strain>
    </source>
</reference>
<name>GATB_ARTOC</name>
<keyword id="KW-0067">ATP-binding</keyword>
<keyword id="KW-0436">Ligase</keyword>
<keyword id="KW-0496">Mitochondrion</keyword>
<keyword id="KW-0547">Nucleotide-binding</keyword>
<keyword id="KW-0648">Protein biosynthesis</keyword>
<keyword id="KW-1185">Reference proteome</keyword>
<keyword id="KW-0809">Transit peptide</keyword>
<dbReference type="EC" id="6.3.5.-" evidence="1"/>
<dbReference type="EMBL" id="DS995705">
    <property type="protein sequence ID" value="EEQ32712.1"/>
    <property type="molecule type" value="Genomic_DNA"/>
</dbReference>
<dbReference type="RefSeq" id="XP_002845662.1">
    <property type="nucleotide sequence ID" value="XM_002845616.1"/>
</dbReference>
<dbReference type="SMR" id="C5FS59"/>
<dbReference type="STRING" id="554155.C5FS59"/>
<dbReference type="GeneID" id="9224669"/>
<dbReference type="VEuPathDB" id="FungiDB:MCYG_05531"/>
<dbReference type="eggNOG" id="KOG2438">
    <property type="taxonomic scope" value="Eukaryota"/>
</dbReference>
<dbReference type="HOGENOM" id="CLU_019240_4_1_1"/>
<dbReference type="OMA" id="ARKWWMG"/>
<dbReference type="OrthoDB" id="1722066at2759"/>
<dbReference type="Proteomes" id="UP000002035">
    <property type="component" value="Unassembled WGS sequence"/>
</dbReference>
<dbReference type="GO" id="GO:0030956">
    <property type="term" value="C:glutamyl-tRNA(Gln) amidotransferase complex"/>
    <property type="evidence" value="ECO:0007669"/>
    <property type="project" value="UniProtKB-UniRule"/>
</dbReference>
<dbReference type="GO" id="GO:0005739">
    <property type="term" value="C:mitochondrion"/>
    <property type="evidence" value="ECO:0007669"/>
    <property type="project" value="UniProtKB-SubCell"/>
</dbReference>
<dbReference type="GO" id="GO:0005524">
    <property type="term" value="F:ATP binding"/>
    <property type="evidence" value="ECO:0007669"/>
    <property type="project" value="UniProtKB-KW"/>
</dbReference>
<dbReference type="GO" id="GO:0050567">
    <property type="term" value="F:glutaminyl-tRNA synthase (glutamine-hydrolyzing) activity"/>
    <property type="evidence" value="ECO:0007669"/>
    <property type="project" value="UniProtKB-UniRule"/>
</dbReference>
<dbReference type="GO" id="GO:0070681">
    <property type="term" value="P:glutaminyl-tRNAGln biosynthesis via transamidation"/>
    <property type="evidence" value="ECO:0007669"/>
    <property type="project" value="UniProtKB-UniRule"/>
</dbReference>
<dbReference type="GO" id="GO:0032543">
    <property type="term" value="P:mitochondrial translation"/>
    <property type="evidence" value="ECO:0007669"/>
    <property type="project" value="UniProtKB-UniRule"/>
</dbReference>
<dbReference type="Gene3D" id="1.10.10.410">
    <property type="match status" value="1"/>
</dbReference>
<dbReference type="HAMAP" id="MF_00121">
    <property type="entry name" value="GatB"/>
    <property type="match status" value="1"/>
</dbReference>
<dbReference type="InterPro" id="IPR017959">
    <property type="entry name" value="Asn/Gln-tRNA_amidoTrfase_suB/E"/>
</dbReference>
<dbReference type="InterPro" id="IPR006075">
    <property type="entry name" value="Asn/Gln-tRNA_Trfase_suB/E_cat"/>
</dbReference>
<dbReference type="InterPro" id="IPR018027">
    <property type="entry name" value="Asn/Gln_amidotransferase"/>
</dbReference>
<dbReference type="InterPro" id="IPR003789">
    <property type="entry name" value="Asn/Gln_tRNA_amidoTrase-B-like"/>
</dbReference>
<dbReference type="InterPro" id="IPR004413">
    <property type="entry name" value="GatB"/>
</dbReference>
<dbReference type="InterPro" id="IPR023168">
    <property type="entry name" value="GatB_Yqey_C_2"/>
</dbReference>
<dbReference type="InterPro" id="IPR017958">
    <property type="entry name" value="Gln-tRNA_amidoTrfase_suB_CS"/>
</dbReference>
<dbReference type="InterPro" id="IPR014746">
    <property type="entry name" value="Gln_synth/guanido_kin_cat_dom"/>
</dbReference>
<dbReference type="NCBIfam" id="TIGR00133">
    <property type="entry name" value="gatB"/>
    <property type="match status" value="1"/>
</dbReference>
<dbReference type="NCBIfam" id="NF004012">
    <property type="entry name" value="PRK05477.1-2"/>
    <property type="match status" value="1"/>
</dbReference>
<dbReference type="PANTHER" id="PTHR11659">
    <property type="entry name" value="GLUTAMYL-TRNA GLN AMIDOTRANSFERASE SUBUNIT B MITOCHONDRIAL AND PROKARYOTIC PET112-RELATED"/>
    <property type="match status" value="1"/>
</dbReference>
<dbReference type="PANTHER" id="PTHR11659:SF0">
    <property type="entry name" value="GLUTAMYL-TRNA(GLN) AMIDOTRANSFERASE SUBUNIT B, MITOCHONDRIAL"/>
    <property type="match status" value="1"/>
</dbReference>
<dbReference type="Pfam" id="PF02934">
    <property type="entry name" value="GatB_N"/>
    <property type="match status" value="1"/>
</dbReference>
<dbReference type="Pfam" id="PF02637">
    <property type="entry name" value="GatB_Yqey"/>
    <property type="match status" value="1"/>
</dbReference>
<dbReference type="SMART" id="SM00845">
    <property type="entry name" value="GatB_Yqey"/>
    <property type="match status" value="1"/>
</dbReference>
<dbReference type="SUPFAM" id="SSF89095">
    <property type="entry name" value="GatB/YqeY motif"/>
    <property type="match status" value="1"/>
</dbReference>
<dbReference type="SUPFAM" id="SSF55931">
    <property type="entry name" value="Glutamine synthetase/guanido kinase"/>
    <property type="match status" value="1"/>
</dbReference>
<dbReference type="PROSITE" id="PS01234">
    <property type="entry name" value="GATB"/>
    <property type="match status" value="1"/>
</dbReference>
<evidence type="ECO:0000255" key="1">
    <source>
        <dbReference type="HAMAP-Rule" id="MF_03147"/>
    </source>
</evidence>
<evidence type="ECO:0000256" key="2">
    <source>
        <dbReference type="SAM" id="MobiDB-lite"/>
    </source>
</evidence>
<comment type="function">
    <text evidence="1">Allows the formation of correctly charged Gln-tRNA(Gln) through the transamidation of misacylated Glu-tRNA(Gln) in the mitochondria. The reaction takes place in the presence of glutamine and ATP through an activated gamma-phospho-Glu-tRNA(Gln).</text>
</comment>
<comment type="catalytic activity">
    <reaction evidence="1">
        <text>L-glutamyl-tRNA(Gln) + L-glutamine + ATP + H2O = L-glutaminyl-tRNA(Gln) + L-glutamate + ADP + phosphate + H(+)</text>
        <dbReference type="Rhea" id="RHEA:17521"/>
        <dbReference type="Rhea" id="RHEA-COMP:9681"/>
        <dbReference type="Rhea" id="RHEA-COMP:9684"/>
        <dbReference type="ChEBI" id="CHEBI:15377"/>
        <dbReference type="ChEBI" id="CHEBI:15378"/>
        <dbReference type="ChEBI" id="CHEBI:29985"/>
        <dbReference type="ChEBI" id="CHEBI:30616"/>
        <dbReference type="ChEBI" id="CHEBI:43474"/>
        <dbReference type="ChEBI" id="CHEBI:58359"/>
        <dbReference type="ChEBI" id="CHEBI:78520"/>
        <dbReference type="ChEBI" id="CHEBI:78521"/>
        <dbReference type="ChEBI" id="CHEBI:456216"/>
    </reaction>
</comment>
<comment type="subunit">
    <text evidence="1">Subunit of the heterotrimeric GatCAB amidotransferase (AdT) complex, composed of A, B and C subunits.</text>
</comment>
<comment type="subcellular location">
    <subcellularLocation>
        <location evidence="1">Mitochondrion</location>
    </subcellularLocation>
</comment>
<comment type="similarity">
    <text evidence="1">Belongs to the GatB/GatE family. GatB subfamily.</text>
</comment>
<feature type="transit peptide" description="Mitochondrion" evidence="1">
    <location>
        <begin position="1"/>
        <end position="32"/>
    </location>
</feature>
<feature type="chain" id="PRO_0000413262" description="Glutamyl-tRNA(Gln) amidotransferase subunit B, mitochondrial">
    <location>
        <begin position="33"/>
        <end position="603"/>
    </location>
</feature>
<feature type="region of interest" description="Disordered" evidence="2">
    <location>
        <begin position="12"/>
        <end position="59"/>
    </location>
</feature>
<feature type="compositionally biased region" description="Low complexity" evidence="2">
    <location>
        <begin position="31"/>
        <end position="48"/>
    </location>
</feature>
<organism>
    <name type="scientific">Arthroderma otae (strain ATCC MYA-4605 / CBS 113480)</name>
    <name type="common">Microsporum canis</name>
    <dbReference type="NCBI Taxonomy" id="554155"/>
    <lineage>
        <taxon>Eukaryota</taxon>
        <taxon>Fungi</taxon>
        <taxon>Dikarya</taxon>
        <taxon>Ascomycota</taxon>
        <taxon>Pezizomycotina</taxon>
        <taxon>Eurotiomycetes</taxon>
        <taxon>Eurotiomycetidae</taxon>
        <taxon>Onygenales</taxon>
        <taxon>Arthrodermataceae</taxon>
        <taxon>Microsporum</taxon>
    </lineage>
</organism>
<gene>
    <name type="ORF">MCYG_05531</name>
</gene>
<sequence length="603" mass="65751">MIRHRLRLALSAAPVTATGRRTRSKTAPRRSLSTQQTQSSASSSSNNLDGDGRAFVPLRKQLKDESKAKRLTGRGKRSKSASSQVEGWELTVGIEVHAQLDTDSKLFSRASAAHDDAPNANVALFDLAFPGSQPWFQPATLIPALRAAIAFGCEIQSVSHFDRKHYFYQDQPAGYQITQYYEPYARSGALWLYPHDGIAPEDGDAVRVGIKQIQMEQDTAKSQELPSHTVLLDFNRVSRPLIEIITLPEIHSPATAAACVRKIQALLQSCGAVNTGMEMGGLRADVNVSVRRTGQVEQHGYEGVSGLGQRTEIKNLSSFKAVEDAIIAERDRQIAVLEGGGKVEGETRGWTIGSTETKRLREKEGSVDYRYMPDPDIGPVVVGAELVERLRTSMPPSPDELLRMLTQDPMYMLTVEDAKPLIELDDCARLEYYLDAVDSLVVLQRDAAAAAAASAASTVSATGKTVGNWVLHELGGLFSRADAAWDGERVPASSLAAIVHLVGTKQITGSTAKSLLSTVFAGEHGGRTVQEMVEQDGLLLRPLAQEEYVSMARTVMAQHPQLVEQIRQGQQGKIGFFVGQIKRMGERGRVEAQRAEEAVRSLL</sequence>
<accession>C5FS59</accession>